<dbReference type="EC" id="5.6.2.4" evidence="1"/>
<dbReference type="EMBL" id="AE000512">
    <property type="protein sequence ID" value="AAD35297.1"/>
    <property type="molecule type" value="Genomic_DNA"/>
</dbReference>
<dbReference type="PIR" id="G72405">
    <property type="entry name" value="G72405"/>
</dbReference>
<dbReference type="RefSeq" id="NP_228020.1">
    <property type="nucleotide sequence ID" value="NC_000853.1"/>
</dbReference>
<dbReference type="PDB" id="1GM5">
    <property type="method" value="X-ray"/>
    <property type="resolution" value="3.24 A"/>
    <property type="chains" value="A=1-780"/>
</dbReference>
<dbReference type="PDBsum" id="1GM5"/>
<dbReference type="SMR" id="Q9WY48"/>
<dbReference type="FunCoup" id="Q9WY48">
    <property type="interactions" value="332"/>
</dbReference>
<dbReference type="PaxDb" id="243274-THEMA_03705"/>
<dbReference type="EnsemblBacteria" id="AAD35297">
    <property type="protein sequence ID" value="AAD35297"/>
    <property type="gene ID" value="TM_0205"/>
</dbReference>
<dbReference type="KEGG" id="tma:TM0205"/>
<dbReference type="PATRIC" id="fig|243274.5.peg.207"/>
<dbReference type="InParanoid" id="Q9WY48"/>
<dbReference type="OrthoDB" id="9804325at2"/>
<dbReference type="BRENDA" id="3.6.4.12">
    <property type="organism ID" value="6331"/>
</dbReference>
<dbReference type="EvolutionaryTrace" id="Q9WY48"/>
<dbReference type="Proteomes" id="UP000008183">
    <property type="component" value="Chromosome"/>
</dbReference>
<dbReference type="GO" id="GO:0005524">
    <property type="term" value="F:ATP binding"/>
    <property type="evidence" value="ECO:0007669"/>
    <property type="project" value="UniProtKB-KW"/>
</dbReference>
<dbReference type="GO" id="GO:0016887">
    <property type="term" value="F:ATP hydrolysis activity"/>
    <property type="evidence" value="ECO:0007669"/>
    <property type="project" value="RHEA"/>
</dbReference>
<dbReference type="GO" id="GO:0003677">
    <property type="term" value="F:DNA binding"/>
    <property type="evidence" value="ECO:0007669"/>
    <property type="project" value="UniProtKB-KW"/>
</dbReference>
<dbReference type="GO" id="GO:0003678">
    <property type="term" value="F:DNA helicase activity"/>
    <property type="evidence" value="ECO:0000318"/>
    <property type="project" value="GO_Central"/>
</dbReference>
<dbReference type="GO" id="GO:0006310">
    <property type="term" value="P:DNA recombination"/>
    <property type="evidence" value="ECO:0007669"/>
    <property type="project" value="UniProtKB-KW"/>
</dbReference>
<dbReference type="GO" id="GO:0006281">
    <property type="term" value="P:DNA repair"/>
    <property type="evidence" value="ECO:0000318"/>
    <property type="project" value="GO_Central"/>
</dbReference>
<dbReference type="CDD" id="cd17992">
    <property type="entry name" value="DEXHc_RecG"/>
    <property type="match status" value="1"/>
</dbReference>
<dbReference type="CDD" id="cd04488">
    <property type="entry name" value="RecG_wedge_OBF"/>
    <property type="match status" value="1"/>
</dbReference>
<dbReference type="CDD" id="cd18811">
    <property type="entry name" value="SF2_C_RecG"/>
    <property type="match status" value="1"/>
</dbReference>
<dbReference type="FunFam" id="2.40.50.140:FF:000995">
    <property type="match status" value="1"/>
</dbReference>
<dbReference type="Gene3D" id="2.40.50.140">
    <property type="entry name" value="Nucleic acid-binding proteins"/>
    <property type="match status" value="1"/>
</dbReference>
<dbReference type="Gene3D" id="3.40.50.300">
    <property type="entry name" value="P-loop containing nucleotide triphosphate hydrolases"/>
    <property type="match status" value="2"/>
</dbReference>
<dbReference type="Gene3D" id="1.20.120.630">
    <property type="entry name" value="RecG, N-terminal domain"/>
    <property type="match status" value="1"/>
</dbReference>
<dbReference type="InterPro" id="IPR004609">
    <property type="entry name" value="ATP-dep_DNA_helicase_RecG"/>
</dbReference>
<dbReference type="InterPro" id="IPR011545">
    <property type="entry name" value="DEAD/DEAH_box_helicase_dom"/>
</dbReference>
<dbReference type="InterPro" id="IPR014001">
    <property type="entry name" value="Helicase_ATP-bd"/>
</dbReference>
<dbReference type="InterPro" id="IPR001650">
    <property type="entry name" value="Helicase_C-like"/>
</dbReference>
<dbReference type="InterPro" id="IPR012340">
    <property type="entry name" value="NA-bd_OB-fold"/>
</dbReference>
<dbReference type="InterPro" id="IPR027417">
    <property type="entry name" value="P-loop_NTPase"/>
</dbReference>
<dbReference type="InterPro" id="IPR047112">
    <property type="entry name" value="RecG/Mfd"/>
</dbReference>
<dbReference type="InterPro" id="IPR045562">
    <property type="entry name" value="RecG_dom3_C"/>
</dbReference>
<dbReference type="InterPro" id="IPR028993">
    <property type="entry name" value="RecG_N"/>
</dbReference>
<dbReference type="InterPro" id="IPR036845">
    <property type="entry name" value="RecG_N_sf"/>
</dbReference>
<dbReference type="InterPro" id="IPR033454">
    <property type="entry name" value="RecG_wedge"/>
</dbReference>
<dbReference type="NCBIfam" id="NF008165">
    <property type="entry name" value="PRK10917.1-3"/>
    <property type="match status" value="1"/>
</dbReference>
<dbReference type="NCBIfam" id="NF008168">
    <property type="entry name" value="PRK10917.2-2"/>
    <property type="match status" value="1"/>
</dbReference>
<dbReference type="NCBIfam" id="TIGR00643">
    <property type="entry name" value="recG"/>
    <property type="match status" value="1"/>
</dbReference>
<dbReference type="PANTHER" id="PTHR47964">
    <property type="entry name" value="ATP-DEPENDENT DNA HELICASE HOMOLOG RECG, CHLOROPLASTIC"/>
    <property type="match status" value="1"/>
</dbReference>
<dbReference type="PANTHER" id="PTHR47964:SF1">
    <property type="entry name" value="ATP-DEPENDENT DNA HELICASE HOMOLOG RECG, CHLOROPLASTIC"/>
    <property type="match status" value="1"/>
</dbReference>
<dbReference type="Pfam" id="PF00270">
    <property type="entry name" value="DEAD"/>
    <property type="match status" value="1"/>
</dbReference>
<dbReference type="Pfam" id="PF00271">
    <property type="entry name" value="Helicase_C"/>
    <property type="match status" value="1"/>
</dbReference>
<dbReference type="Pfam" id="PF19833">
    <property type="entry name" value="RecG_dom3_C"/>
    <property type="match status" value="1"/>
</dbReference>
<dbReference type="Pfam" id="PF17190">
    <property type="entry name" value="RecG_N"/>
    <property type="match status" value="1"/>
</dbReference>
<dbReference type="Pfam" id="PF17191">
    <property type="entry name" value="RecG_wedge"/>
    <property type="match status" value="1"/>
</dbReference>
<dbReference type="SMART" id="SM00487">
    <property type="entry name" value="DEXDc"/>
    <property type="match status" value="1"/>
</dbReference>
<dbReference type="SMART" id="SM00490">
    <property type="entry name" value="HELICc"/>
    <property type="match status" value="1"/>
</dbReference>
<dbReference type="SUPFAM" id="SSF50249">
    <property type="entry name" value="Nucleic acid-binding proteins"/>
    <property type="match status" value="1"/>
</dbReference>
<dbReference type="SUPFAM" id="SSF52540">
    <property type="entry name" value="P-loop containing nucleoside triphosphate hydrolases"/>
    <property type="match status" value="2"/>
</dbReference>
<dbReference type="SUPFAM" id="SSF69008">
    <property type="entry name" value="RecG, N-terminal domain"/>
    <property type="match status" value="1"/>
</dbReference>
<dbReference type="PROSITE" id="PS51192">
    <property type="entry name" value="HELICASE_ATP_BIND_1"/>
    <property type="match status" value="1"/>
</dbReference>
<dbReference type="PROSITE" id="PS51194">
    <property type="entry name" value="HELICASE_CTER"/>
    <property type="match status" value="1"/>
</dbReference>
<accession>Q9WY48</accession>
<evidence type="ECO:0000250" key="1">
    <source>
        <dbReference type="UniProtKB" id="P24230"/>
    </source>
</evidence>
<evidence type="ECO:0000255" key="2">
    <source>
        <dbReference type="PROSITE-ProRule" id="PRU00541"/>
    </source>
</evidence>
<evidence type="ECO:0000255" key="3">
    <source>
        <dbReference type="PROSITE-ProRule" id="PRU00542"/>
    </source>
</evidence>
<evidence type="ECO:0000269" key="4">
    <source>
    </source>
</evidence>
<evidence type="ECO:0000303" key="5">
    <source>
    </source>
</evidence>
<evidence type="ECO:0000305" key="6"/>
<evidence type="ECO:0000305" key="7">
    <source>
    </source>
</evidence>
<evidence type="ECO:0000312" key="8">
    <source>
        <dbReference type="EMBL" id="AAD35297.1"/>
    </source>
</evidence>
<evidence type="ECO:0007744" key="9">
    <source>
        <dbReference type="PDB" id="1GM5"/>
    </source>
</evidence>
<evidence type="ECO:0007829" key="10">
    <source>
        <dbReference type="PDB" id="1GM5"/>
    </source>
</evidence>
<name>RECG_THEMA</name>
<sequence>MLCSRYFTSSLFLWGEALPTLLEEFLNEVEKMLKNQVNTRRIHQLLKELDDPLLENKDLEEKLQAFLDYVKEIPNLPEARKRYRIQKSLEMIEKLRSWFLIDYLECSGEEVDLSTDIQYAKGVGPNRKKKLKKLGIETLRDLLEFFPRDYEDRRKIFKLNDLLPGEKVTTQGKIVSVETKKFQNMNILTAVLSDGLVHVPLKWFNQDYLQTYLKQLTGKEVFVTGTVKSNAYTGQYEIHNAEVTPKEGEYVRRILPIYRLTSGISQKQMRKIFEENIPSLCCSLKETLPERILEKRKLLGVKDAYYGMHFPKTFYHLEKARERLAYEELFVLQLAFQKIRKEREKHGGIPKKIEGKLAEEFIKSLPFKLTNAQKRAHQEIRNDMISEKPMNRLLQGDVGSGKTVVAQLAILDNYEAGFQTAFMVPTSILAIQHYRRTVESFSKFNIHVALLIGATTPSEKEKIKSGLRNGQIDVVIGTHALIQEDVHFKNLGLVIIDEQHRFGVKQREALMNKGKMVDTLVMSATPIPRSMALAFYGDLDVTVIDEMPPGRKEVQTMLVPMDRVNEVYEFVRQEVMRGGQAFIVYPLIEESDKLNVKSAVEMYEYLSKEVFPEFKLGLMHGRLSQEEKDRVMLEFAEGRYDILVSTTVIEVGIDVPRANVMVIENPERFGLAQLHQLRGRVGRGGQEAYCFLVVGDVGEEAMERLRFFTLNTDGFKIAEYDLKTRGPGEFFGVKQHGLSGFKVADLYRDLKLLEWAREDVQEIDVEGIELPEEIKLIEVG</sequence>
<feature type="chain" id="PRO_0000461189" description="ATP-dependent DNA helicase RecG">
    <location>
        <begin position="1"/>
        <end position="780"/>
    </location>
</feature>
<feature type="domain" description="Helicase ATP-binding" evidence="2">
    <location>
        <begin position="383"/>
        <end position="544"/>
    </location>
</feature>
<feature type="domain" description="Helicase C-terminal" evidence="3">
    <location>
        <begin position="563"/>
        <end position="728"/>
    </location>
</feature>
<feature type="region of interest" description="Domain 1" evidence="4">
    <location>
        <begin position="1"/>
        <end position="350"/>
    </location>
</feature>
<feature type="region of interest" description="Wedge domain" evidence="4">
    <location>
        <begin position="154"/>
        <end position="252"/>
    </location>
</feature>
<feature type="region of interest" description="Domain 2" evidence="4">
    <location>
        <begin position="351"/>
        <end position="549"/>
    </location>
</feature>
<feature type="region of interest" description="Domain 3" evidence="4">
    <location>
        <begin position="550"/>
        <end position="780"/>
    </location>
</feature>
<feature type="short sequence motif" description="DEAH box" evidence="2">
    <location>
        <begin position="497"/>
        <end position="500"/>
    </location>
</feature>
<feature type="binding site" evidence="7 9">
    <location>
        <position position="367"/>
    </location>
    <ligand>
        <name>ATP</name>
        <dbReference type="ChEBI" id="CHEBI:30616"/>
    </ligand>
</feature>
<feature type="binding site" evidence="7 9">
    <location>
        <position position="369"/>
    </location>
    <ligand>
        <name>ATP</name>
        <dbReference type="ChEBI" id="CHEBI:30616"/>
    </ligand>
</feature>
<feature type="binding site" evidence="7 9">
    <location>
        <position position="399"/>
    </location>
    <ligand>
        <name>ATP</name>
        <dbReference type="ChEBI" id="CHEBI:30616"/>
    </ligand>
</feature>
<feature type="binding site" evidence="7 9">
    <location>
        <position position="400"/>
    </location>
    <ligand>
        <name>ATP</name>
        <dbReference type="ChEBI" id="CHEBI:30616"/>
    </ligand>
</feature>
<feature type="binding site" evidence="7 9">
    <location>
        <position position="401"/>
    </location>
    <ligand>
        <name>ATP</name>
        <dbReference type="ChEBI" id="CHEBI:30616"/>
    </ligand>
</feature>
<feature type="binding site" evidence="7 9">
    <location>
        <position position="402"/>
    </location>
    <ligand>
        <name>ATP</name>
        <dbReference type="ChEBI" id="CHEBI:30616"/>
    </ligand>
</feature>
<feature type="binding site" evidence="7 9">
    <location>
        <position position="403"/>
    </location>
    <ligand>
        <name>ATP</name>
        <dbReference type="ChEBI" id="CHEBI:30616"/>
    </ligand>
</feature>
<feature type="binding site" evidence="7 9">
    <location>
        <position position="436"/>
    </location>
    <ligand>
        <name>ATP</name>
        <dbReference type="ChEBI" id="CHEBI:30616"/>
    </ligand>
</feature>
<feature type="helix" evidence="10">
    <location>
        <begin position="9"/>
        <end position="11"/>
    </location>
</feature>
<feature type="helix" evidence="10">
    <location>
        <begin position="12"/>
        <end position="15"/>
    </location>
</feature>
<feature type="strand" evidence="10">
    <location>
        <begin position="18"/>
        <end position="21"/>
    </location>
</feature>
<feature type="helix" evidence="10">
    <location>
        <begin position="22"/>
        <end position="33"/>
    </location>
</feature>
<feature type="turn" evidence="10">
    <location>
        <begin position="39"/>
        <end position="41"/>
    </location>
</feature>
<feature type="helix" evidence="10">
    <location>
        <begin position="42"/>
        <end position="48"/>
    </location>
</feature>
<feature type="helix" evidence="10">
    <location>
        <begin position="52"/>
        <end position="55"/>
    </location>
</feature>
<feature type="helix" evidence="10">
    <location>
        <begin position="57"/>
        <end position="70"/>
    </location>
</feature>
<feature type="strand" evidence="10">
    <location>
        <begin position="73"/>
        <end position="76"/>
    </location>
</feature>
<feature type="helix" evidence="10">
    <location>
        <begin position="78"/>
        <end position="99"/>
    </location>
</feature>
<feature type="strand" evidence="10">
    <location>
        <begin position="117"/>
        <end position="122"/>
    </location>
</feature>
<feature type="helix" evidence="10">
    <location>
        <begin position="125"/>
        <end position="132"/>
    </location>
</feature>
<feature type="turn" evidence="10">
    <location>
        <begin position="133"/>
        <end position="135"/>
    </location>
</feature>
<feature type="helix" evidence="10">
    <location>
        <begin position="140"/>
        <end position="142"/>
    </location>
</feature>
<feature type="strand" evidence="10">
    <location>
        <begin position="148"/>
        <end position="151"/>
    </location>
</feature>
<feature type="strand" evidence="10">
    <location>
        <begin position="169"/>
        <end position="172"/>
    </location>
</feature>
<feature type="strand" evidence="10">
    <location>
        <begin position="178"/>
        <end position="181"/>
    </location>
</feature>
<feature type="strand" evidence="10">
    <location>
        <begin position="186"/>
        <end position="192"/>
    </location>
</feature>
<feature type="strand" evidence="10">
    <location>
        <begin position="199"/>
        <end position="203"/>
    </location>
</feature>
<feature type="helix" evidence="10">
    <location>
        <begin position="210"/>
        <end position="214"/>
    </location>
</feature>
<feature type="strand" evidence="10">
    <location>
        <begin position="221"/>
        <end position="227"/>
    </location>
</feature>
<feature type="strand" evidence="10">
    <location>
        <begin position="238"/>
        <end position="244"/>
    </location>
</feature>
<feature type="strand" evidence="10">
    <location>
        <begin position="249"/>
        <end position="253"/>
    </location>
</feature>
<feature type="strand" evidence="10">
    <location>
        <begin position="255"/>
        <end position="257"/>
    </location>
</feature>
<feature type="helix" evidence="10">
    <location>
        <begin position="266"/>
        <end position="282"/>
    </location>
</feature>
<feature type="helix" evidence="10">
    <location>
        <begin position="290"/>
        <end position="296"/>
    </location>
</feature>
<feature type="helix" evidence="10">
    <location>
        <begin position="302"/>
        <end position="309"/>
    </location>
</feature>
<feature type="helix" evidence="10">
    <location>
        <begin position="314"/>
        <end position="346"/>
    </location>
</feature>
<feature type="helix" evidence="10">
    <location>
        <begin position="356"/>
        <end position="364"/>
    </location>
</feature>
<feature type="strand" evidence="10">
    <location>
        <begin position="365"/>
        <end position="367"/>
    </location>
</feature>
<feature type="helix" evidence="10">
    <location>
        <begin position="371"/>
        <end position="385"/>
    </location>
</feature>
<feature type="strand" evidence="10">
    <location>
        <begin position="386"/>
        <end position="388"/>
    </location>
</feature>
<feature type="strand" evidence="10">
    <location>
        <begin position="393"/>
        <end position="395"/>
    </location>
</feature>
<feature type="strand" evidence="10">
    <location>
        <begin position="398"/>
        <end position="401"/>
    </location>
</feature>
<feature type="helix" evidence="10">
    <location>
        <begin position="402"/>
        <end position="416"/>
    </location>
</feature>
<feature type="strand" evidence="10">
    <location>
        <begin position="420"/>
        <end position="423"/>
    </location>
</feature>
<feature type="helix" evidence="10">
    <location>
        <begin position="427"/>
        <end position="441"/>
    </location>
</feature>
<feature type="strand" evidence="10">
    <location>
        <begin position="448"/>
        <end position="450"/>
    </location>
</feature>
<feature type="strand" evidence="10">
    <location>
        <begin position="453"/>
        <end position="455"/>
    </location>
</feature>
<feature type="helix" evidence="10">
    <location>
        <begin position="457"/>
        <end position="468"/>
    </location>
</feature>
<feature type="strand" evidence="10">
    <location>
        <begin position="474"/>
        <end position="477"/>
    </location>
</feature>
<feature type="helix" evidence="10">
    <location>
        <begin position="481"/>
        <end position="484"/>
    </location>
</feature>
<feature type="strand" evidence="10">
    <location>
        <begin position="493"/>
        <end position="498"/>
    </location>
</feature>
<feature type="strand" evidence="10">
    <location>
        <begin position="512"/>
        <end position="515"/>
    </location>
</feature>
<feature type="strand" evidence="10">
    <location>
        <begin position="519"/>
        <end position="525"/>
    </location>
</feature>
<feature type="helix" evidence="10">
    <location>
        <begin position="529"/>
        <end position="535"/>
    </location>
</feature>
<feature type="strand" evidence="10">
    <location>
        <begin position="542"/>
        <end position="544"/>
    </location>
</feature>
<feature type="helix" evidence="10">
    <location>
        <begin position="564"/>
        <end position="574"/>
    </location>
</feature>
<feature type="turn" evidence="10">
    <location>
        <begin position="575"/>
        <end position="577"/>
    </location>
</feature>
<feature type="helix" evidence="10">
    <location>
        <begin position="598"/>
        <end position="604"/>
    </location>
</feature>
<feature type="helix" evidence="10">
    <location>
        <begin position="606"/>
        <end position="608"/>
    </location>
</feature>
<feature type="strand" evidence="10">
    <location>
        <begin position="621"/>
        <end position="623"/>
    </location>
</feature>
<feature type="helix" evidence="10">
    <location>
        <begin position="629"/>
        <end position="635"/>
    </location>
</feature>
<feature type="turn" evidence="10">
    <location>
        <begin position="636"/>
        <end position="638"/>
    </location>
</feature>
<feature type="strand" evidence="10">
    <location>
        <begin position="639"/>
        <end position="642"/>
    </location>
</feature>
<feature type="strand" evidence="10">
    <location>
        <begin position="660"/>
        <end position="663"/>
    </location>
</feature>
<feature type="strand" evidence="10">
    <location>
        <begin position="667"/>
        <end position="669"/>
    </location>
</feature>
<feature type="helix" evidence="10">
    <location>
        <begin position="673"/>
        <end position="679"/>
    </location>
</feature>
<feature type="strand" evidence="10">
    <location>
        <begin position="689"/>
        <end position="691"/>
    </location>
</feature>
<feature type="helix" evidence="10">
    <location>
        <begin position="699"/>
        <end position="709"/>
    </location>
</feature>
<feature type="helix" evidence="10">
    <location>
        <begin position="715"/>
        <end position="723"/>
    </location>
</feature>
<feature type="helix" evidence="10">
    <location>
        <begin position="744"/>
        <end position="752"/>
    </location>
</feature>
<proteinExistence type="evidence at protein level"/>
<comment type="function">
    <text evidence="1 7">Plays a critical role in recombination and DNA repair. Helps process Holliday junction intermediates to mature products by catalyzing branch migration. Has replication fork (Y-DNA) regression activity, unwinds stalled or blocked replication forks to make a HJ that can be resolved. Has a DNA unwinding activity characteristic of a DNA helicase with 3'-5' polarity (By similarity). Might be a DNA translocase rather than a bona fide helicase (Probable) (PubMed:11595187).</text>
</comment>
<comment type="catalytic activity">
    <reaction evidence="1">
        <text>Couples ATP hydrolysis with the unwinding of duplex DNA by translocating in the 3'-5' direction.</text>
        <dbReference type="EC" id="5.6.2.4"/>
    </reaction>
</comment>
<comment type="catalytic activity">
    <reaction evidence="1">
        <text>ATP + H2O = ADP + phosphate + H(+)</text>
        <dbReference type="Rhea" id="RHEA:13065"/>
        <dbReference type="ChEBI" id="CHEBI:15377"/>
        <dbReference type="ChEBI" id="CHEBI:15378"/>
        <dbReference type="ChEBI" id="CHEBI:30616"/>
        <dbReference type="ChEBI" id="CHEBI:43474"/>
        <dbReference type="ChEBI" id="CHEBI:456216"/>
        <dbReference type="EC" id="5.6.2.4"/>
    </reaction>
</comment>
<comment type="subunit">
    <text evidence="4">Monomer (PubMed:11595187).</text>
</comment>
<comment type="domain">
    <text evidence="4">Has 3 domains; domain 1 in the N-terminus makes most of the contacts with the replication fork DNA while the other 2 resemble classic 'helicase' domains (PubMed:11595187). The wedge domain within the N-terminus inserts into the replication fork junction, where the lagging and leading strand split. The 50 C-terminal residues extend from domain 3 and contact domain 1 (PubMed:11595187).</text>
</comment>
<comment type="similarity">
    <text evidence="6">Belongs to the helicase family. RecG subfamily.</text>
</comment>
<gene>
    <name evidence="5" type="primary">recG</name>
    <name evidence="8" type="ordered locus">TM_0205</name>
</gene>
<protein>
    <recommendedName>
        <fullName evidence="5">ATP-dependent DNA helicase RecG</fullName>
        <ecNumber evidence="1">5.6.2.4</ecNumber>
    </recommendedName>
    <alternativeName>
        <fullName>DNA branch migration protein RecG</fullName>
    </alternativeName>
    <alternativeName>
        <fullName>Probable DNA 3'-5' helicase RecG</fullName>
    </alternativeName>
</protein>
<reference evidence="8" key="1">
    <citation type="journal article" date="1999" name="Nature">
        <title>Evidence for lateral gene transfer between Archaea and Bacteria from genome sequence of Thermotoga maritima.</title>
        <authorList>
            <person name="Nelson K.E."/>
            <person name="Clayton R.A."/>
            <person name="Gill S.R."/>
            <person name="Gwinn M.L."/>
            <person name="Dodson R.J."/>
            <person name="Haft D.H."/>
            <person name="Hickey E.K."/>
            <person name="Peterson J.D."/>
            <person name="Nelson W.C."/>
            <person name="Ketchum K.A."/>
            <person name="McDonald L.A."/>
            <person name="Utterback T.R."/>
            <person name="Malek J.A."/>
            <person name="Linher K.D."/>
            <person name="Garrett M.M."/>
            <person name="Stewart A.M."/>
            <person name="Cotton M.D."/>
            <person name="Pratt M.S."/>
            <person name="Phillips C.A."/>
            <person name="Richardson D.L."/>
            <person name="Heidelberg J.F."/>
            <person name="Sutton G.G."/>
            <person name="Fleischmann R.D."/>
            <person name="Eisen J.A."/>
            <person name="White O."/>
            <person name="Salzberg S.L."/>
            <person name="Smith H.O."/>
            <person name="Venter J.C."/>
            <person name="Fraser C.M."/>
        </authorList>
    </citation>
    <scope>NUCLEOTIDE SEQUENCE [LARGE SCALE GENOMIC DNA]</scope>
    <source>
        <strain>ATCC 43589 / DSM 3109 / JCM 10099 / NBRC 100826 / MSB8</strain>
    </source>
</reference>
<reference evidence="9" key="2">
    <citation type="journal article" date="2001" name="Cell">
        <title>Structural analysis of DNA replication fork reversal by RecG.</title>
        <authorList>
            <person name="Singleton M.R."/>
            <person name="Scaife S."/>
            <person name="Wigley D.B."/>
        </authorList>
    </citation>
    <scope>X-RAY CRYSTALLOGRAPHY (3.24 ANGSTROMS) IN COMPLEX WITH STALLED REPLICATION FORK AND ADP</scope>
    <scope>POSSIBLE REACTION MECHANISM</scope>
    <scope>SUBUNIT</scope>
    <scope>DOMAIN</scope>
    <scope>DNA-BINDING</scope>
</reference>
<organism>
    <name type="scientific">Thermotoga maritima (strain ATCC 43589 / DSM 3109 / JCM 10099 / NBRC 100826 / MSB8)</name>
    <dbReference type="NCBI Taxonomy" id="243274"/>
    <lineage>
        <taxon>Bacteria</taxon>
        <taxon>Thermotogati</taxon>
        <taxon>Thermotogota</taxon>
        <taxon>Thermotogae</taxon>
        <taxon>Thermotogales</taxon>
        <taxon>Thermotogaceae</taxon>
        <taxon>Thermotoga</taxon>
    </lineage>
</organism>
<keyword id="KW-0002">3D-structure</keyword>
<keyword id="KW-0067">ATP-binding</keyword>
<keyword id="KW-0227">DNA damage</keyword>
<keyword id="KW-0233">DNA recombination</keyword>
<keyword id="KW-0234">DNA repair</keyword>
<keyword id="KW-0238">DNA-binding</keyword>
<keyword id="KW-0347">Helicase</keyword>
<keyword id="KW-0378">Hydrolase</keyword>
<keyword id="KW-0413">Isomerase</keyword>
<keyword id="KW-0547">Nucleotide-binding</keyword>
<keyword id="KW-1185">Reference proteome</keyword>